<name>HUTI_STAA8</name>
<dbReference type="EC" id="3.5.2.7" evidence="1"/>
<dbReference type="EMBL" id="CP000253">
    <property type="protein sequence ID" value="ABD31616.1"/>
    <property type="molecule type" value="Genomic_DNA"/>
</dbReference>
<dbReference type="RefSeq" id="WP_000998767.1">
    <property type="nucleotide sequence ID" value="NZ_LS483365.1"/>
</dbReference>
<dbReference type="RefSeq" id="YP_501067.1">
    <property type="nucleotide sequence ID" value="NC_007795.1"/>
</dbReference>
<dbReference type="SMR" id="Q2FVT6"/>
<dbReference type="STRING" id="93061.SAOUHSC_02606"/>
<dbReference type="PaxDb" id="1280-SAXN108_2579"/>
<dbReference type="GeneID" id="3921384"/>
<dbReference type="KEGG" id="sao:SAOUHSC_02606"/>
<dbReference type="PATRIC" id="fig|93061.5.peg.2354"/>
<dbReference type="eggNOG" id="COG1228">
    <property type="taxonomic scope" value="Bacteria"/>
</dbReference>
<dbReference type="HOGENOM" id="CLU_041647_0_1_9"/>
<dbReference type="OrthoDB" id="9776455at2"/>
<dbReference type="UniPathway" id="UPA00379">
    <property type="reaction ID" value="UER00551"/>
</dbReference>
<dbReference type="PRO" id="PR:Q2FVT6"/>
<dbReference type="Proteomes" id="UP000008816">
    <property type="component" value="Chromosome"/>
</dbReference>
<dbReference type="GO" id="GO:0005737">
    <property type="term" value="C:cytoplasm"/>
    <property type="evidence" value="ECO:0007669"/>
    <property type="project" value="UniProtKB-SubCell"/>
</dbReference>
<dbReference type="GO" id="GO:0050480">
    <property type="term" value="F:imidazolonepropionase activity"/>
    <property type="evidence" value="ECO:0000318"/>
    <property type="project" value="GO_Central"/>
</dbReference>
<dbReference type="GO" id="GO:0005506">
    <property type="term" value="F:iron ion binding"/>
    <property type="evidence" value="ECO:0007669"/>
    <property type="project" value="UniProtKB-UniRule"/>
</dbReference>
<dbReference type="GO" id="GO:0008270">
    <property type="term" value="F:zinc ion binding"/>
    <property type="evidence" value="ECO:0007669"/>
    <property type="project" value="UniProtKB-UniRule"/>
</dbReference>
<dbReference type="GO" id="GO:0006548">
    <property type="term" value="P:L-histidine catabolic process"/>
    <property type="evidence" value="ECO:0000318"/>
    <property type="project" value="GO_Central"/>
</dbReference>
<dbReference type="GO" id="GO:0019556">
    <property type="term" value="P:L-histidine catabolic process to glutamate and formamide"/>
    <property type="evidence" value="ECO:0007669"/>
    <property type="project" value="UniProtKB-UniPathway"/>
</dbReference>
<dbReference type="GO" id="GO:0019557">
    <property type="term" value="P:L-histidine catabolic process to glutamate and formate"/>
    <property type="evidence" value="ECO:0007669"/>
    <property type="project" value="UniProtKB-UniPathway"/>
</dbReference>
<dbReference type="CDD" id="cd01296">
    <property type="entry name" value="Imidazolone-5PH"/>
    <property type="match status" value="1"/>
</dbReference>
<dbReference type="FunFam" id="3.20.20.140:FF:000007">
    <property type="entry name" value="Imidazolonepropionase"/>
    <property type="match status" value="1"/>
</dbReference>
<dbReference type="Gene3D" id="3.20.20.140">
    <property type="entry name" value="Metal-dependent hydrolases"/>
    <property type="match status" value="1"/>
</dbReference>
<dbReference type="Gene3D" id="2.30.40.10">
    <property type="entry name" value="Urease, subunit C, domain 1"/>
    <property type="match status" value="1"/>
</dbReference>
<dbReference type="HAMAP" id="MF_00372">
    <property type="entry name" value="HutI"/>
    <property type="match status" value="1"/>
</dbReference>
<dbReference type="InterPro" id="IPR006680">
    <property type="entry name" value="Amidohydro-rel"/>
</dbReference>
<dbReference type="InterPro" id="IPR005920">
    <property type="entry name" value="HutI"/>
</dbReference>
<dbReference type="InterPro" id="IPR011059">
    <property type="entry name" value="Metal-dep_hydrolase_composite"/>
</dbReference>
<dbReference type="InterPro" id="IPR032466">
    <property type="entry name" value="Metal_Hydrolase"/>
</dbReference>
<dbReference type="NCBIfam" id="TIGR01224">
    <property type="entry name" value="hutI"/>
    <property type="match status" value="1"/>
</dbReference>
<dbReference type="PANTHER" id="PTHR42752">
    <property type="entry name" value="IMIDAZOLONEPROPIONASE"/>
    <property type="match status" value="1"/>
</dbReference>
<dbReference type="PANTHER" id="PTHR42752:SF1">
    <property type="entry name" value="IMIDAZOLONEPROPIONASE-RELATED"/>
    <property type="match status" value="1"/>
</dbReference>
<dbReference type="Pfam" id="PF01979">
    <property type="entry name" value="Amidohydro_1"/>
    <property type="match status" value="1"/>
</dbReference>
<dbReference type="SUPFAM" id="SSF51338">
    <property type="entry name" value="Composite domain of metallo-dependent hydrolases"/>
    <property type="match status" value="1"/>
</dbReference>
<dbReference type="SUPFAM" id="SSF51556">
    <property type="entry name" value="Metallo-dependent hydrolases"/>
    <property type="match status" value="1"/>
</dbReference>
<sequence length="412" mass="45039">MNDLIINHIAELILPRSTDKPLKGKELDELNVVKNGTVVIKDGKIVYAGTHTDDYDATETIDASGKVVSPALVDAHTHLTFGGSREHEMSLKRQGKSYLEILEMGGGILSTVNATRETSEDDLFKKAEHDLLTMIKHGVLAVESKSGYGLDRENELKQLKVSNRLAEKYDLDMKHTFLGPHAVPKEASSNEAFLEEMIALLPEVKQYADFADIFCETGVFTIEQSQHYMQKAKEAGFKVKIHADEIDPLGGLELAIDEQAISADHLVASSDKGKEKLRNSDTVAVLLPATTFYLGKEDYADARGMLDNNGAIALATDYNPGSSVTNNLQLVMAIAALKLKLSPNEVWNAVTVNAAKAIDINAGTINTGDKANLVIWDAPNHEYIPYHFGINHAEKVIKDGKVIVDNTVSFKA</sequence>
<protein>
    <recommendedName>
        <fullName evidence="1">Imidazolonepropionase</fullName>
        <ecNumber evidence="1">3.5.2.7</ecNumber>
    </recommendedName>
    <alternativeName>
        <fullName evidence="1">Imidazolone-5-propionate hydrolase</fullName>
    </alternativeName>
</protein>
<organism>
    <name type="scientific">Staphylococcus aureus (strain NCTC 8325 / PS 47)</name>
    <dbReference type="NCBI Taxonomy" id="93061"/>
    <lineage>
        <taxon>Bacteria</taxon>
        <taxon>Bacillati</taxon>
        <taxon>Bacillota</taxon>
        <taxon>Bacilli</taxon>
        <taxon>Bacillales</taxon>
        <taxon>Staphylococcaceae</taxon>
        <taxon>Staphylococcus</taxon>
    </lineage>
</organism>
<evidence type="ECO:0000255" key="1">
    <source>
        <dbReference type="HAMAP-Rule" id="MF_00372"/>
    </source>
</evidence>
<feature type="chain" id="PRO_0000306520" description="Imidazolonepropionase">
    <location>
        <begin position="1"/>
        <end position="412"/>
    </location>
</feature>
<feature type="binding site" evidence="1">
    <location>
        <position position="76"/>
    </location>
    <ligand>
        <name>Fe(3+)</name>
        <dbReference type="ChEBI" id="CHEBI:29034"/>
    </ligand>
</feature>
<feature type="binding site" evidence="1">
    <location>
        <position position="76"/>
    </location>
    <ligand>
        <name>Zn(2+)</name>
        <dbReference type="ChEBI" id="CHEBI:29105"/>
    </ligand>
</feature>
<feature type="binding site" evidence="1">
    <location>
        <position position="78"/>
    </location>
    <ligand>
        <name>Fe(3+)</name>
        <dbReference type="ChEBI" id="CHEBI:29034"/>
    </ligand>
</feature>
<feature type="binding site" evidence="1">
    <location>
        <position position="78"/>
    </location>
    <ligand>
        <name>Zn(2+)</name>
        <dbReference type="ChEBI" id="CHEBI:29105"/>
    </ligand>
</feature>
<feature type="binding site" evidence="1">
    <location>
        <position position="85"/>
    </location>
    <ligand>
        <name>4-imidazolone-5-propanoate</name>
        <dbReference type="ChEBI" id="CHEBI:77893"/>
    </ligand>
</feature>
<feature type="binding site" evidence="1">
    <location>
        <position position="148"/>
    </location>
    <ligand>
        <name>4-imidazolone-5-propanoate</name>
        <dbReference type="ChEBI" id="CHEBI:77893"/>
    </ligand>
</feature>
<feature type="binding site" evidence="1">
    <location>
        <position position="148"/>
    </location>
    <ligand>
        <name>N-formimidoyl-L-glutamate</name>
        <dbReference type="ChEBI" id="CHEBI:58928"/>
    </ligand>
</feature>
<feature type="binding site" evidence="1">
    <location>
        <position position="181"/>
    </location>
    <ligand>
        <name>4-imidazolone-5-propanoate</name>
        <dbReference type="ChEBI" id="CHEBI:77893"/>
    </ligand>
</feature>
<feature type="binding site" evidence="1">
    <location>
        <position position="242"/>
    </location>
    <ligand>
        <name>Fe(3+)</name>
        <dbReference type="ChEBI" id="CHEBI:29034"/>
    </ligand>
</feature>
<feature type="binding site" evidence="1">
    <location>
        <position position="242"/>
    </location>
    <ligand>
        <name>Zn(2+)</name>
        <dbReference type="ChEBI" id="CHEBI:29105"/>
    </ligand>
</feature>
<feature type="binding site" evidence="1">
    <location>
        <position position="245"/>
    </location>
    <ligand>
        <name>4-imidazolone-5-propanoate</name>
        <dbReference type="ChEBI" id="CHEBI:77893"/>
    </ligand>
</feature>
<feature type="binding site" evidence="1">
    <location>
        <position position="317"/>
    </location>
    <ligand>
        <name>Fe(3+)</name>
        <dbReference type="ChEBI" id="CHEBI:29034"/>
    </ligand>
</feature>
<feature type="binding site" evidence="1">
    <location>
        <position position="317"/>
    </location>
    <ligand>
        <name>Zn(2+)</name>
        <dbReference type="ChEBI" id="CHEBI:29105"/>
    </ligand>
</feature>
<feature type="binding site" evidence="1">
    <location>
        <position position="319"/>
    </location>
    <ligand>
        <name>N-formimidoyl-L-glutamate</name>
        <dbReference type="ChEBI" id="CHEBI:58928"/>
    </ligand>
</feature>
<feature type="binding site" evidence="1">
    <location>
        <position position="321"/>
    </location>
    <ligand>
        <name>N-formimidoyl-L-glutamate</name>
        <dbReference type="ChEBI" id="CHEBI:58928"/>
    </ligand>
</feature>
<feature type="binding site" evidence="1">
    <location>
        <position position="322"/>
    </location>
    <ligand>
        <name>4-imidazolone-5-propanoate</name>
        <dbReference type="ChEBI" id="CHEBI:77893"/>
    </ligand>
</feature>
<comment type="function">
    <text evidence="1">Catalyzes the hydrolytic cleavage of the carbon-nitrogen bond in imidazolone-5-propanoate to yield N-formimidoyl-L-glutamate. It is the third step in the universal histidine degradation pathway.</text>
</comment>
<comment type="catalytic activity">
    <reaction evidence="1">
        <text>4-imidazolone-5-propanoate + H2O = N-formimidoyl-L-glutamate</text>
        <dbReference type="Rhea" id="RHEA:23660"/>
        <dbReference type="ChEBI" id="CHEBI:15377"/>
        <dbReference type="ChEBI" id="CHEBI:58928"/>
        <dbReference type="ChEBI" id="CHEBI:77893"/>
        <dbReference type="EC" id="3.5.2.7"/>
    </reaction>
</comment>
<comment type="cofactor">
    <cofactor evidence="1">
        <name>Zn(2+)</name>
        <dbReference type="ChEBI" id="CHEBI:29105"/>
    </cofactor>
    <cofactor evidence="1">
        <name>Fe(3+)</name>
        <dbReference type="ChEBI" id="CHEBI:29034"/>
    </cofactor>
    <text evidence="1">Binds 1 zinc or iron ion per subunit.</text>
</comment>
<comment type="pathway">
    <text evidence="1">Amino-acid degradation; L-histidine degradation into L-glutamate; N-formimidoyl-L-glutamate from L-histidine: step 3/3.</text>
</comment>
<comment type="subcellular location">
    <subcellularLocation>
        <location evidence="1">Cytoplasm</location>
    </subcellularLocation>
</comment>
<comment type="similarity">
    <text evidence="1">Belongs to the metallo-dependent hydrolases superfamily. HutI family.</text>
</comment>
<gene>
    <name evidence="1" type="primary">hutI</name>
    <name type="ordered locus">SAOUHSC_02606</name>
</gene>
<keyword id="KW-0963">Cytoplasm</keyword>
<keyword id="KW-0369">Histidine metabolism</keyword>
<keyword id="KW-0378">Hydrolase</keyword>
<keyword id="KW-0408">Iron</keyword>
<keyword id="KW-0479">Metal-binding</keyword>
<keyword id="KW-1185">Reference proteome</keyword>
<keyword id="KW-0862">Zinc</keyword>
<accession>Q2FVT6</accession>
<proteinExistence type="inferred from homology"/>
<reference key="1">
    <citation type="book" date="2006" name="Gram positive pathogens, 2nd edition">
        <title>The Staphylococcus aureus NCTC 8325 genome.</title>
        <editorList>
            <person name="Fischetti V."/>
            <person name="Novick R."/>
            <person name="Ferretti J."/>
            <person name="Portnoy D."/>
            <person name="Rood J."/>
        </editorList>
        <authorList>
            <person name="Gillaspy A.F."/>
            <person name="Worrell V."/>
            <person name="Orvis J."/>
            <person name="Roe B.A."/>
            <person name="Dyer D.W."/>
            <person name="Iandolo J.J."/>
        </authorList>
    </citation>
    <scope>NUCLEOTIDE SEQUENCE [LARGE SCALE GENOMIC DNA]</scope>
    <source>
        <strain>NCTC 8325 / PS 47</strain>
    </source>
</reference>